<keyword id="KW-0963">Cytoplasm</keyword>
<keyword id="KW-0350">Heme biosynthesis</keyword>
<keyword id="KW-0408">Iron</keyword>
<keyword id="KW-0456">Lyase</keyword>
<keyword id="KW-0479">Metal-binding</keyword>
<keyword id="KW-0627">Porphyrin biosynthesis</keyword>
<gene>
    <name evidence="1" type="primary">hemH</name>
    <name type="ordered locus">BURPS1710b_3326</name>
</gene>
<name>HEMH_BURP1</name>
<evidence type="ECO:0000255" key="1">
    <source>
        <dbReference type="HAMAP-Rule" id="MF_00323"/>
    </source>
</evidence>
<comment type="function">
    <text evidence="1">Catalyzes the ferrous insertion into protoporphyrin IX.</text>
</comment>
<comment type="catalytic activity">
    <reaction evidence="1">
        <text>heme b + 2 H(+) = protoporphyrin IX + Fe(2+)</text>
        <dbReference type="Rhea" id="RHEA:22584"/>
        <dbReference type="ChEBI" id="CHEBI:15378"/>
        <dbReference type="ChEBI" id="CHEBI:29033"/>
        <dbReference type="ChEBI" id="CHEBI:57306"/>
        <dbReference type="ChEBI" id="CHEBI:60344"/>
        <dbReference type="EC" id="4.98.1.1"/>
    </reaction>
</comment>
<comment type="pathway">
    <text evidence="1">Porphyrin-containing compound metabolism; protoheme biosynthesis; protoheme from protoporphyrin-IX: step 1/1.</text>
</comment>
<comment type="subcellular location">
    <subcellularLocation>
        <location evidence="1">Cytoplasm</location>
    </subcellularLocation>
</comment>
<comment type="similarity">
    <text evidence="1">Belongs to the ferrochelatase family.</text>
</comment>
<sequence length="367" mass="40571">MSFDSVPRHALSMRFDLEPPSHASAAHRVAVLLVNLGTPDAPTPRAVRRYLAQFLSDPRVVEIPQLVWQVILRTLILPLRGRASAKKYAAVWLPEGSPLRVYTERQVESVKPLFAANGYRVIVDYAMRYGTPSIADVLAQLKRAGAERVLLLPMYPQYSSSTTATAFDAAFAALGRMRNQPEVRTVRHYADHPAYIHALAEQVRQYWAAHGRPAFDAGDKLVLSFHGVPKRTLDLGDPYHDQCQQTAALLMSALGLTTFECRVTFQSRFGKAEWLQPYTAPTLKELGAAGVRRADVFCPGFTADCLETIEEIGIEVRDEFVHGGGKEFHRIPCLNASPAWIAALGEIAAENLQGWPVRVAMAPEAVS</sequence>
<accession>Q3JP06</accession>
<dbReference type="EC" id="4.98.1.1" evidence="1"/>
<dbReference type="EMBL" id="CP000124">
    <property type="protein sequence ID" value="ABA51049.1"/>
    <property type="molecule type" value="Genomic_DNA"/>
</dbReference>
<dbReference type="SMR" id="Q3JP06"/>
<dbReference type="EnsemblBacteria" id="ABA51049">
    <property type="protein sequence ID" value="ABA51049"/>
    <property type="gene ID" value="BURPS1710b_3326"/>
</dbReference>
<dbReference type="KEGG" id="bpm:BURPS1710b_3326"/>
<dbReference type="HOGENOM" id="CLU_018884_0_0_4"/>
<dbReference type="UniPathway" id="UPA00252">
    <property type="reaction ID" value="UER00325"/>
</dbReference>
<dbReference type="Proteomes" id="UP000002700">
    <property type="component" value="Chromosome I"/>
</dbReference>
<dbReference type="GO" id="GO:0005737">
    <property type="term" value="C:cytoplasm"/>
    <property type="evidence" value="ECO:0007669"/>
    <property type="project" value="UniProtKB-SubCell"/>
</dbReference>
<dbReference type="GO" id="GO:0004325">
    <property type="term" value="F:ferrochelatase activity"/>
    <property type="evidence" value="ECO:0007669"/>
    <property type="project" value="UniProtKB-UniRule"/>
</dbReference>
<dbReference type="GO" id="GO:0046872">
    <property type="term" value="F:metal ion binding"/>
    <property type="evidence" value="ECO:0007669"/>
    <property type="project" value="UniProtKB-KW"/>
</dbReference>
<dbReference type="GO" id="GO:0006783">
    <property type="term" value="P:heme biosynthetic process"/>
    <property type="evidence" value="ECO:0007669"/>
    <property type="project" value="UniProtKB-UniRule"/>
</dbReference>
<dbReference type="CDD" id="cd00419">
    <property type="entry name" value="Ferrochelatase_C"/>
    <property type="match status" value="1"/>
</dbReference>
<dbReference type="CDD" id="cd03411">
    <property type="entry name" value="Ferrochelatase_N"/>
    <property type="match status" value="1"/>
</dbReference>
<dbReference type="FunFam" id="3.40.50.1400:FF:000002">
    <property type="entry name" value="Ferrochelatase"/>
    <property type="match status" value="1"/>
</dbReference>
<dbReference type="Gene3D" id="3.40.50.1400">
    <property type="match status" value="2"/>
</dbReference>
<dbReference type="HAMAP" id="MF_00323">
    <property type="entry name" value="Ferrochelatase"/>
    <property type="match status" value="1"/>
</dbReference>
<dbReference type="InterPro" id="IPR001015">
    <property type="entry name" value="Ferrochelatase"/>
</dbReference>
<dbReference type="InterPro" id="IPR019772">
    <property type="entry name" value="Ferrochelatase_AS"/>
</dbReference>
<dbReference type="InterPro" id="IPR033644">
    <property type="entry name" value="Ferrochelatase_C"/>
</dbReference>
<dbReference type="InterPro" id="IPR033659">
    <property type="entry name" value="Ferrochelatase_N"/>
</dbReference>
<dbReference type="NCBIfam" id="TIGR00109">
    <property type="entry name" value="hemH"/>
    <property type="match status" value="1"/>
</dbReference>
<dbReference type="PANTHER" id="PTHR11108">
    <property type="entry name" value="FERROCHELATASE"/>
    <property type="match status" value="1"/>
</dbReference>
<dbReference type="PANTHER" id="PTHR11108:SF1">
    <property type="entry name" value="FERROCHELATASE, MITOCHONDRIAL"/>
    <property type="match status" value="1"/>
</dbReference>
<dbReference type="Pfam" id="PF00762">
    <property type="entry name" value="Ferrochelatase"/>
    <property type="match status" value="1"/>
</dbReference>
<dbReference type="SUPFAM" id="SSF53800">
    <property type="entry name" value="Chelatase"/>
    <property type="match status" value="1"/>
</dbReference>
<dbReference type="PROSITE" id="PS00534">
    <property type="entry name" value="FERROCHELATASE"/>
    <property type="match status" value="1"/>
</dbReference>
<organism>
    <name type="scientific">Burkholderia pseudomallei (strain 1710b)</name>
    <dbReference type="NCBI Taxonomy" id="320372"/>
    <lineage>
        <taxon>Bacteria</taxon>
        <taxon>Pseudomonadati</taxon>
        <taxon>Pseudomonadota</taxon>
        <taxon>Betaproteobacteria</taxon>
        <taxon>Burkholderiales</taxon>
        <taxon>Burkholderiaceae</taxon>
        <taxon>Burkholderia</taxon>
        <taxon>pseudomallei group</taxon>
    </lineage>
</organism>
<feature type="chain" id="PRO_1000019283" description="Ferrochelatase">
    <location>
        <begin position="1"/>
        <end position="367"/>
    </location>
</feature>
<feature type="binding site" evidence="1">
    <location>
        <position position="226"/>
    </location>
    <ligand>
        <name>Fe cation</name>
        <dbReference type="ChEBI" id="CHEBI:24875"/>
    </ligand>
</feature>
<feature type="binding site" evidence="1">
    <location>
        <position position="307"/>
    </location>
    <ligand>
        <name>Fe cation</name>
        <dbReference type="ChEBI" id="CHEBI:24875"/>
    </ligand>
</feature>
<protein>
    <recommendedName>
        <fullName evidence="1">Ferrochelatase</fullName>
        <ecNumber evidence="1">4.98.1.1</ecNumber>
    </recommendedName>
    <alternativeName>
        <fullName evidence="1">Heme synthase</fullName>
    </alternativeName>
    <alternativeName>
        <fullName evidence="1">Protoheme ferro-lyase</fullName>
    </alternativeName>
</protein>
<reference key="1">
    <citation type="journal article" date="2010" name="Genome Biol. Evol.">
        <title>Continuing evolution of Burkholderia mallei through genome reduction and large-scale rearrangements.</title>
        <authorList>
            <person name="Losada L."/>
            <person name="Ronning C.M."/>
            <person name="DeShazer D."/>
            <person name="Woods D."/>
            <person name="Fedorova N."/>
            <person name="Kim H.S."/>
            <person name="Shabalina S.A."/>
            <person name="Pearson T.R."/>
            <person name="Brinkac L."/>
            <person name="Tan P."/>
            <person name="Nandi T."/>
            <person name="Crabtree J."/>
            <person name="Badger J."/>
            <person name="Beckstrom-Sternberg S."/>
            <person name="Saqib M."/>
            <person name="Schutzer S.E."/>
            <person name="Keim P."/>
            <person name="Nierman W.C."/>
        </authorList>
    </citation>
    <scope>NUCLEOTIDE SEQUENCE [LARGE SCALE GENOMIC DNA]</scope>
    <source>
        <strain>1710b</strain>
    </source>
</reference>
<proteinExistence type="inferred from homology"/>